<keyword id="KW-1185">Reference proteome</keyword>
<keyword id="KW-0687">Ribonucleoprotein</keyword>
<keyword id="KW-0689">Ribosomal protein</keyword>
<keyword id="KW-0694">RNA-binding</keyword>
<keyword id="KW-0699">rRNA-binding</keyword>
<comment type="function">
    <text evidence="1">This is one of the proteins that bind and probably mediate the attachment of the 5S RNA into the large ribosomal subunit, where it forms part of the central protuberance.</text>
</comment>
<comment type="subunit">
    <text evidence="1">Part of the 50S ribosomal subunit; part of the 5S rRNA/L5/L18/L25 subcomplex. Contacts the 5S and 23S rRNAs.</text>
</comment>
<comment type="similarity">
    <text evidence="1">Belongs to the universal ribosomal protein uL18 family.</text>
</comment>
<accession>B9KEF6</accession>
<feature type="chain" id="PRO_1000166215" description="Large ribosomal subunit protein uL18">
    <location>
        <begin position="1"/>
        <end position="118"/>
    </location>
</feature>
<evidence type="ECO:0000255" key="1">
    <source>
        <dbReference type="HAMAP-Rule" id="MF_01337"/>
    </source>
</evidence>
<evidence type="ECO:0000305" key="2"/>
<organism>
    <name type="scientific">Campylobacter lari (strain RM2100 / D67 / ATCC BAA-1060)</name>
    <dbReference type="NCBI Taxonomy" id="306263"/>
    <lineage>
        <taxon>Bacteria</taxon>
        <taxon>Pseudomonadati</taxon>
        <taxon>Campylobacterota</taxon>
        <taxon>Epsilonproteobacteria</taxon>
        <taxon>Campylobacterales</taxon>
        <taxon>Campylobacteraceae</taxon>
        <taxon>Campylobacter</taxon>
    </lineage>
</organism>
<reference key="1">
    <citation type="journal article" date="2008" name="Foodborne Pathog. Dis.">
        <title>The complete genome sequence and analysis of the human pathogen Campylobacter lari.</title>
        <authorList>
            <person name="Miller W.G."/>
            <person name="Wang G."/>
            <person name="Binnewies T.T."/>
            <person name="Parker C.T."/>
        </authorList>
    </citation>
    <scope>NUCLEOTIDE SEQUENCE [LARGE SCALE GENOMIC DNA]</scope>
    <source>
        <strain>RM2100 / D67 / ATCC BAA-1060</strain>
    </source>
</reference>
<protein>
    <recommendedName>
        <fullName evidence="1">Large ribosomal subunit protein uL18</fullName>
    </recommendedName>
    <alternativeName>
        <fullName evidence="2">50S ribosomal protein L18</fullName>
    </alternativeName>
</protein>
<name>RL18_CAMLR</name>
<proteinExistence type="inferred from homology"/>
<gene>
    <name evidence="1" type="primary">rplR</name>
    <name type="ordered locus">Cla_0075</name>
</gene>
<sequence>MRANVLKRKLSLRIKRKKRIRAKISGTQALPRISVFKSNRTLYIQAIDDVKAVTLAAVDGRKIGVKANKEGAKKIAAEFAKALKAKNIEEAVFDRNGYLYHGVIAVLAEALRENGIKL</sequence>
<dbReference type="EMBL" id="CP000932">
    <property type="protein sequence ID" value="ACM63441.1"/>
    <property type="molecule type" value="Genomic_DNA"/>
</dbReference>
<dbReference type="RefSeq" id="WP_012660827.1">
    <property type="nucleotide sequence ID" value="NC_012039.1"/>
</dbReference>
<dbReference type="SMR" id="B9KEF6"/>
<dbReference type="STRING" id="306263.Cla_0075"/>
<dbReference type="KEGG" id="cla:CLA_0075"/>
<dbReference type="PATRIC" id="fig|306263.5.peg.74"/>
<dbReference type="eggNOG" id="COG0256">
    <property type="taxonomic scope" value="Bacteria"/>
</dbReference>
<dbReference type="HOGENOM" id="CLU_098841_0_1_7"/>
<dbReference type="Proteomes" id="UP000007727">
    <property type="component" value="Chromosome"/>
</dbReference>
<dbReference type="GO" id="GO:0022625">
    <property type="term" value="C:cytosolic large ribosomal subunit"/>
    <property type="evidence" value="ECO:0007669"/>
    <property type="project" value="TreeGrafter"/>
</dbReference>
<dbReference type="GO" id="GO:0008097">
    <property type="term" value="F:5S rRNA binding"/>
    <property type="evidence" value="ECO:0007669"/>
    <property type="project" value="TreeGrafter"/>
</dbReference>
<dbReference type="GO" id="GO:0003735">
    <property type="term" value="F:structural constituent of ribosome"/>
    <property type="evidence" value="ECO:0007669"/>
    <property type="project" value="InterPro"/>
</dbReference>
<dbReference type="GO" id="GO:0006412">
    <property type="term" value="P:translation"/>
    <property type="evidence" value="ECO:0007669"/>
    <property type="project" value="UniProtKB-UniRule"/>
</dbReference>
<dbReference type="CDD" id="cd00432">
    <property type="entry name" value="Ribosomal_L18_L5e"/>
    <property type="match status" value="1"/>
</dbReference>
<dbReference type="Gene3D" id="3.30.420.100">
    <property type="match status" value="1"/>
</dbReference>
<dbReference type="HAMAP" id="MF_01337_B">
    <property type="entry name" value="Ribosomal_uL18_B"/>
    <property type="match status" value="1"/>
</dbReference>
<dbReference type="InterPro" id="IPR004389">
    <property type="entry name" value="Ribosomal_uL18_bac-type"/>
</dbReference>
<dbReference type="InterPro" id="IPR005484">
    <property type="entry name" value="Ribosomal_uL18_bac/euk"/>
</dbReference>
<dbReference type="NCBIfam" id="TIGR00060">
    <property type="entry name" value="L18_bact"/>
    <property type="match status" value="1"/>
</dbReference>
<dbReference type="PANTHER" id="PTHR12899">
    <property type="entry name" value="39S RIBOSOMAL PROTEIN L18, MITOCHONDRIAL"/>
    <property type="match status" value="1"/>
</dbReference>
<dbReference type="PANTHER" id="PTHR12899:SF3">
    <property type="entry name" value="LARGE RIBOSOMAL SUBUNIT PROTEIN UL18M"/>
    <property type="match status" value="1"/>
</dbReference>
<dbReference type="Pfam" id="PF00861">
    <property type="entry name" value="Ribosomal_L18p"/>
    <property type="match status" value="1"/>
</dbReference>
<dbReference type="SUPFAM" id="SSF53137">
    <property type="entry name" value="Translational machinery components"/>
    <property type="match status" value="1"/>
</dbReference>